<evidence type="ECO:0000255" key="1">
    <source>
        <dbReference type="HAMAP-Rule" id="MF_00022"/>
    </source>
</evidence>
<gene>
    <name evidence="1" type="primary">gltX</name>
    <name type="ordered locus">SCO5547</name>
    <name type="ORF">SC1C2.28</name>
</gene>
<protein>
    <recommendedName>
        <fullName evidence="1">Glutamate--tRNA ligase</fullName>
        <ecNumber evidence="1">6.1.1.17</ecNumber>
    </recommendedName>
    <alternativeName>
        <fullName evidence="1">Glutamyl-tRNA synthetase</fullName>
        <shortName evidence="1">GluRS</shortName>
    </alternativeName>
</protein>
<feature type="chain" id="PRO_0000119663" description="Glutamate--tRNA ligase">
    <location>
        <begin position="1"/>
        <end position="494"/>
    </location>
</feature>
<feature type="short sequence motif" description="'HIGH' region" evidence="1">
    <location>
        <begin position="15"/>
        <end position="25"/>
    </location>
</feature>
<feature type="short sequence motif" description="'KMSKS' region" evidence="1">
    <location>
        <begin position="260"/>
        <end position="264"/>
    </location>
</feature>
<feature type="binding site" evidence="1">
    <location>
        <position position="112"/>
    </location>
    <ligand>
        <name>Zn(2+)</name>
        <dbReference type="ChEBI" id="CHEBI:29105"/>
    </ligand>
</feature>
<feature type="binding site" evidence="1">
    <location>
        <position position="114"/>
    </location>
    <ligand>
        <name>Zn(2+)</name>
        <dbReference type="ChEBI" id="CHEBI:29105"/>
    </ligand>
</feature>
<feature type="binding site" evidence="1">
    <location>
        <position position="139"/>
    </location>
    <ligand>
        <name>Zn(2+)</name>
        <dbReference type="ChEBI" id="CHEBI:29105"/>
    </ligand>
</feature>
<feature type="binding site" evidence="1">
    <location>
        <position position="141"/>
    </location>
    <ligand>
        <name>Zn(2+)</name>
        <dbReference type="ChEBI" id="CHEBI:29105"/>
    </ligand>
</feature>
<feature type="binding site" evidence="1">
    <location>
        <position position="263"/>
    </location>
    <ligand>
        <name>ATP</name>
        <dbReference type="ChEBI" id="CHEBI:30616"/>
    </ligand>
</feature>
<name>SYE_STRCO</name>
<accession>O86528</accession>
<keyword id="KW-0030">Aminoacyl-tRNA synthetase</keyword>
<keyword id="KW-0067">ATP-binding</keyword>
<keyword id="KW-0963">Cytoplasm</keyword>
<keyword id="KW-0436">Ligase</keyword>
<keyword id="KW-0479">Metal-binding</keyword>
<keyword id="KW-0547">Nucleotide-binding</keyword>
<keyword id="KW-0648">Protein biosynthesis</keyword>
<keyword id="KW-1185">Reference proteome</keyword>
<keyword id="KW-0862">Zinc</keyword>
<organism>
    <name type="scientific">Streptomyces coelicolor (strain ATCC BAA-471 / A3(2) / M145)</name>
    <dbReference type="NCBI Taxonomy" id="100226"/>
    <lineage>
        <taxon>Bacteria</taxon>
        <taxon>Bacillati</taxon>
        <taxon>Actinomycetota</taxon>
        <taxon>Actinomycetes</taxon>
        <taxon>Kitasatosporales</taxon>
        <taxon>Streptomycetaceae</taxon>
        <taxon>Streptomyces</taxon>
        <taxon>Streptomyces albidoflavus group</taxon>
    </lineage>
</organism>
<sequence length="494" mass="54917">MASASGSPVRVRFCPSPTGNPHVGLVRTALFNWAFARHHQGTLVFRIEDTDAARDSEESYDQLLDSMRWLGFDWDEGPEVGGPHAPYRQSQRMDIYQDVAQKLLDAGHAYRCYCSQEELDTRREAARAAGKPSGYDGHCRELTDAQVEEYTSQGREPIVRFRMPDEAITFTDLVRGEITYLPENVPDYGIVRANGAPLYTLVNPVDDALMEITHVLRGEDLLSSTPRQIALYKALIELGVAKEIPAFGHLPYVMGEGNKKLSKRDPQSSLNLYRERGFLPEGLLNYLSLLGWSLSADQDIFTIEEMVAAFDVSDVQPNPARFDLKKCEAINGDHIRLLEVKDFTERCRPWLKAPVAPWAPEDFDEAKWQAIAPHAQTRLKVLSEITDNVDFLFLPEPVFDEASWTKAMKEGSDALLTTAREKLDAADWTSPEALKEAVLAAGEAHGLKLGKAQAPVRVAVTGRTVGLPLFESLEVLGKEKALARIDAALARLAA</sequence>
<reference key="1">
    <citation type="journal article" date="2002" name="Nature">
        <title>Complete genome sequence of the model actinomycete Streptomyces coelicolor A3(2).</title>
        <authorList>
            <person name="Bentley S.D."/>
            <person name="Chater K.F."/>
            <person name="Cerdeno-Tarraga A.-M."/>
            <person name="Challis G.L."/>
            <person name="Thomson N.R."/>
            <person name="James K.D."/>
            <person name="Harris D.E."/>
            <person name="Quail M.A."/>
            <person name="Kieser H."/>
            <person name="Harper D."/>
            <person name="Bateman A."/>
            <person name="Brown S."/>
            <person name="Chandra G."/>
            <person name="Chen C.W."/>
            <person name="Collins M."/>
            <person name="Cronin A."/>
            <person name="Fraser A."/>
            <person name="Goble A."/>
            <person name="Hidalgo J."/>
            <person name="Hornsby T."/>
            <person name="Howarth S."/>
            <person name="Huang C.-H."/>
            <person name="Kieser T."/>
            <person name="Larke L."/>
            <person name="Murphy L.D."/>
            <person name="Oliver K."/>
            <person name="O'Neil S."/>
            <person name="Rabbinowitsch E."/>
            <person name="Rajandream M.A."/>
            <person name="Rutherford K.M."/>
            <person name="Rutter S."/>
            <person name="Seeger K."/>
            <person name="Saunders D."/>
            <person name="Sharp S."/>
            <person name="Squares R."/>
            <person name="Squares S."/>
            <person name="Taylor K."/>
            <person name="Warren T."/>
            <person name="Wietzorrek A."/>
            <person name="Woodward J.R."/>
            <person name="Barrell B.G."/>
            <person name="Parkhill J."/>
            <person name="Hopwood D.A."/>
        </authorList>
    </citation>
    <scope>NUCLEOTIDE SEQUENCE [LARGE SCALE GENOMIC DNA]</scope>
    <source>
        <strain>ATCC BAA-471 / A3(2) / M145</strain>
    </source>
</reference>
<comment type="function">
    <text evidence="1">Catalyzes the attachment of glutamate to tRNA(Glu) in a two-step reaction: glutamate is first activated by ATP to form Glu-AMP and then transferred to the acceptor end of tRNA(Glu).</text>
</comment>
<comment type="catalytic activity">
    <reaction evidence="1">
        <text>tRNA(Glu) + L-glutamate + ATP = L-glutamyl-tRNA(Glu) + AMP + diphosphate</text>
        <dbReference type="Rhea" id="RHEA:23540"/>
        <dbReference type="Rhea" id="RHEA-COMP:9663"/>
        <dbReference type="Rhea" id="RHEA-COMP:9680"/>
        <dbReference type="ChEBI" id="CHEBI:29985"/>
        <dbReference type="ChEBI" id="CHEBI:30616"/>
        <dbReference type="ChEBI" id="CHEBI:33019"/>
        <dbReference type="ChEBI" id="CHEBI:78442"/>
        <dbReference type="ChEBI" id="CHEBI:78520"/>
        <dbReference type="ChEBI" id="CHEBI:456215"/>
        <dbReference type="EC" id="6.1.1.17"/>
    </reaction>
</comment>
<comment type="cofactor">
    <cofactor evidence="1">
        <name>Zn(2+)</name>
        <dbReference type="ChEBI" id="CHEBI:29105"/>
    </cofactor>
    <text evidence="1">Binds 1 zinc ion per subunit.</text>
</comment>
<comment type="subunit">
    <text evidence="1">Monomer.</text>
</comment>
<comment type="subcellular location">
    <subcellularLocation>
        <location evidence="1">Cytoplasm</location>
    </subcellularLocation>
</comment>
<comment type="similarity">
    <text evidence="1">Belongs to the class-I aminoacyl-tRNA synthetase family. Glutamate--tRNA ligase type 1 subfamily.</text>
</comment>
<proteinExistence type="inferred from homology"/>
<dbReference type="EC" id="6.1.1.17" evidence="1"/>
<dbReference type="EMBL" id="AL939124">
    <property type="protein sequence ID" value="CAA19995.1"/>
    <property type="molecule type" value="Genomic_DNA"/>
</dbReference>
<dbReference type="PIR" id="T29077">
    <property type="entry name" value="T29077"/>
</dbReference>
<dbReference type="RefSeq" id="NP_629681.1">
    <property type="nucleotide sequence ID" value="NC_003888.3"/>
</dbReference>
<dbReference type="RefSeq" id="WP_003973448.1">
    <property type="nucleotide sequence ID" value="NZ_VNID01000011.1"/>
</dbReference>
<dbReference type="SMR" id="O86528"/>
<dbReference type="FunCoup" id="O86528">
    <property type="interactions" value="470"/>
</dbReference>
<dbReference type="STRING" id="100226.gene:17763199"/>
<dbReference type="PaxDb" id="100226-SCO5547"/>
<dbReference type="KEGG" id="sco:SCO5547"/>
<dbReference type="PATRIC" id="fig|100226.15.peg.5635"/>
<dbReference type="eggNOG" id="COG0008">
    <property type="taxonomic scope" value="Bacteria"/>
</dbReference>
<dbReference type="HOGENOM" id="CLU_015768_6_1_11"/>
<dbReference type="InParanoid" id="O86528"/>
<dbReference type="OrthoDB" id="9807503at2"/>
<dbReference type="PhylomeDB" id="O86528"/>
<dbReference type="Proteomes" id="UP000001973">
    <property type="component" value="Chromosome"/>
</dbReference>
<dbReference type="GO" id="GO:0005829">
    <property type="term" value="C:cytosol"/>
    <property type="evidence" value="ECO:0000318"/>
    <property type="project" value="GO_Central"/>
</dbReference>
<dbReference type="GO" id="GO:0005524">
    <property type="term" value="F:ATP binding"/>
    <property type="evidence" value="ECO:0007669"/>
    <property type="project" value="UniProtKB-UniRule"/>
</dbReference>
<dbReference type="GO" id="GO:0004818">
    <property type="term" value="F:glutamate-tRNA ligase activity"/>
    <property type="evidence" value="ECO:0000318"/>
    <property type="project" value="GO_Central"/>
</dbReference>
<dbReference type="GO" id="GO:0000049">
    <property type="term" value="F:tRNA binding"/>
    <property type="evidence" value="ECO:0007669"/>
    <property type="project" value="InterPro"/>
</dbReference>
<dbReference type="GO" id="GO:0008270">
    <property type="term" value="F:zinc ion binding"/>
    <property type="evidence" value="ECO:0007669"/>
    <property type="project" value="UniProtKB-UniRule"/>
</dbReference>
<dbReference type="GO" id="GO:0006424">
    <property type="term" value="P:glutamyl-tRNA aminoacylation"/>
    <property type="evidence" value="ECO:0000318"/>
    <property type="project" value="GO_Central"/>
</dbReference>
<dbReference type="CDD" id="cd00808">
    <property type="entry name" value="GluRS_core"/>
    <property type="match status" value="1"/>
</dbReference>
<dbReference type="FunFam" id="3.40.50.620:FF:000149">
    <property type="entry name" value="Glutamate--tRNA ligase"/>
    <property type="match status" value="1"/>
</dbReference>
<dbReference type="Gene3D" id="1.10.10.350">
    <property type="match status" value="1"/>
</dbReference>
<dbReference type="Gene3D" id="1.10.8.70">
    <property type="entry name" value="Glutamate-tRNA synthetase, class I, anticodon-binding domain 1"/>
    <property type="match status" value="1"/>
</dbReference>
<dbReference type="Gene3D" id="3.40.50.620">
    <property type="entry name" value="HUPs"/>
    <property type="match status" value="1"/>
</dbReference>
<dbReference type="HAMAP" id="MF_00022">
    <property type="entry name" value="Glu_tRNA_synth_type1"/>
    <property type="match status" value="1"/>
</dbReference>
<dbReference type="InterPro" id="IPR045462">
    <property type="entry name" value="aa-tRNA-synth_I_cd-bd"/>
</dbReference>
<dbReference type="InterPro" id="IPR020751">
    <property type="entry name" value="aa-tRNA-synth_I_codon-bd_sub2"/>
</dbReference>
<dbReference type="InterPro" id="IPR008925">
    <property type="entry name" value="aa_tRNA-synth_I_cd-bd_sf"/>
</dbReference>
<dbReference type="InterPro" id="IPR004527">
    <property type="entry name" value="Glu-tRNA-ligase_bac/mito"/>
</dbReference>
<dbReference type="InterPro" id="IPR020752">
    <property type="entry name" value="Glu-tRNA-synth_I_codon-bd_sub1"/>
</dbReference>
<dbReference type="InterPro" id="IPR000924">
    <property type="entry name" value="Glu/Gln-tRNA-synth"/>
</dbReference>
<dbReference type="InterPro" id="IPR020058">
    <property type="entry name" value="Glu/Gln-tRNA-synth_Ib_cat-dom"/>
</dbReference>
<dbReference type="InterPro" id="IPR049940">
    <property type="entry name" value="GluQ/Sye"/>
</dbReference>
<dbReference type="InterPro" id="IPR033910">
    <property type="entry name" value="GluRS_core"/>
</dbReference>
<dbReference type="InterPro" id="IPR014729">
    <property type="entry name" value="Rossmann-like_a/b/a_fold"/>
</dbReference>
<dbReference type="NCBIfam" id="TIGR00464">
    <property type="entry name" value="gltX_bact"/>
    <property type="match status" value="1"/>
</dbReference>
<dbReference type="PANTHER" id="PTHR43311">
    <property type="entry name" value="GLUTAMATE--TRNA LIGASE"/>
    <property type="match status" value="1"/>
</dbReference>
<dbReference type="PANTHER" id="PTHR43311:SF2">
    <property type="entry name" value="GLUTAMATE--TRNA LIGASE, MITOCHONDRIAL-RELATED"/>
    <property type="match status" value="1"/>
</dbReference>
<dbReference type="Pfam" id="PF19269">
    <property type="entry name" value="Anticodon_2"/>
    <property type="match status" value="1"/>
</dbReference>
<dbReference type="Pfam" id="PF00749">
    <property type="entry name" value="tRNA-synt_1c"/>
    <property type="match status" value="1"/>
</dbReference>
<dbReference type="PRINTS" id="PR00987">
    <property type="entry name" value="TRNASYNTHGLU"/>
</dbReference>
<dbReference type="SUPFAM" id="SSF48163">
    <property type="entry name" value="An anticodon-binding domain of class I aminoacyl-tRNA synthetases"/>
    <property type="match status" value="1"/>
</dbReference>
<dbReference type="SUPFAM" id="SSF52374">
    <property type="entry name" value="Nucleotidylyl transferase"/>
    <property type="match status" value="1"/>
</dbReference>